<proteinExistence type="evidence at transcript level"/>
<feature type="chain" id="PRO_0000448735" description="Protein REPRESSOR OF SILENCING 3">
    <location>
        <begin position="1"/>
        <end position="748"/>
    </location>
</feature>
<feature type="domain" description="RRM" evidence="1">
    <location>
        <begin position="10"/>
        <end position="86"/>
    </location>
</feature>
<feature type="region of interest" description="Disordered" evidence="2">
    <location>
        <begin position="244"/>
        <end position="318"/>
    </location>
</feature>
<feature type="region of interest" description="Disordered" evidence="2">
    <location>
        <begin position="350"/>
        <end position="531"/>
    </location>
</feature>
<feature type="region of interest" description="Disordered" evidence="2">
    <location>
        <begin position="579"/>
        <end position="600"/>
    </location>
</feature>
<feature type="region of interest" description="Disordered" evidence="2">
    <location>
        <begin position="729"/>
        <end position="748"/>
    </location>
</feature>
<feature type="compositionally biased region" description="Polar residues" evidence="2">
    <location>
        <begin position="266"/>
        <end position="288"/>
    </location>
</feature>
<feature type="compositionally biased region" description="Basic and acidic residues" evidence="2">
    <location>
        <begin position="294"/>
        <end position="314"/>
    </location>
</feature>
<feature type="compositionally biased region" description="Basic residues" evidence="2">
    <location>
        <begin position="373"/>
        <end position="382"/>
    </location>
</feature>
<feature type="compositionally biased region" description="Acidic residues" evidence="2">
    <location>
        <begin position="403"/>
        <end position="416"/>
    </location>
</feature>
<feature type="compositionally biased region" description="Acidic residues" evidence="2">
    <location>
        <begin position="439"/>
        <end position="472"/>
    </location>
</feature>
<feature type="compositionally biased region" description="Acidic residues" evidence="2">
    <location>
        <begin position="491"/>
        <end position="518"/>
    </location>
</feature>
<feature type="compositionally biased region" description="Polar residues" evidence="2">
    <location>
        <begin position="520"/>
        <end position="531"/>
    </location>
</feature>
<feature type="sequence conflict" description="In Ref. 3; AAM98125." evidence="5" ref="3">
    <original>T</original>
    <variation>A</variation>
    <location>
        <position position="404"/>
    </location>
</feature>
<organism>
    <name type="scientific">Arabidopsis thaliana</name>
    <name type="common">Mouse-ear cress</name>
    <dbReference type="NCBI Taxonomy" id="3702"/>
    <lineage>
        <taxon>Eukaryota</taxon>
        <taxon>Viridiplantae</taxon>
        <taxon>Streptophyta</taxon>
        <taxon>Embryophyta</taxon>
        <taxon>Tracheophyta</taxon>
        <taxon>Spermatophyta</taxon>
        <taxon>Magnoliopsida</taxon>
        <taxon>eudicotyledons</taxon>
        <taxon>Gunneridae</taxon>
        <taxon>Pentapetalae</taxon>
        <taxon>rosids</taxon>
        <taxon>malvids</taxon>
        <taxon>Brassicales</taxon>
        <taxon>Brassicaceae</taxon>
        <taxon>Camelineae</taxon>
        <taxon>Arabidopsis</taxon>
    </lineage>
</organism>
<gene>
    <name evidence="4" type="primary">ROS3</name>
    <name evidence="6" type="ordered locus">At5g58130</name>
    <name evidence="7" type="ORF">K21L19.13</name>
</gene>
<evidence type="ECO:0000255" key="1">
    <source>
        <dbReference type="PROSITE-ProRule" id="PRU00176"/>
    </source>
</evidence>
<evidence type="ECO:0000256" key="2">
    <source>
        <dbReference type="SAM" id="MobiDB-lite"/>
    </source>
</evidence>
<evidence type="ECO:0000269" key="3">
    <source>
    </source>
</evidence>
<evidence type="ECO:0000303" key="4">
    <source>
    </source>
</evidence>
<evidence type="ECO:0000305" key="5"/>
<evidence type="ECO:0000312" key="6">
    <source>
        <dbReference type="Araport" id="AT5G58130"/>
    </source>
</evidence>
<evidence type="ECO:0000312" key="7">
    <source>
        <dbReference type="EMBL" id="BAB11005.1"/>
    </source>
</evidence>
<comment type="function">
    <text evidence="3">RNA-binding protein required for DNA demethylation and to eluviate siRNA-mediated transcriptional gene silencing (TGS), probably by guiding ROS1 (PubMed:18815596). Can bind specifically single stranded G-rich RNAs of 21-, 24- or 26-nt corresponding to promoter sequence of target genes; this interaction directs demethylation of target sequences (PubMed:18815596).</text>
</comment>
<comment type="subcellular location">
    <subcellularLocation>
        <location evidence="3">Nucleus</location>
    </subcellularLocation>
    <subcellularLocation>
        <location evidence="3">Nucleus</location>
        <location evidence="3">Nucleolus</location>
    </subcellularLocation>
    <subcellularLocation>
        <location evidence="3">Nucleus</location>
        <location evidence="3">Nucleoplasm</location>
    </subcellularLocation>
    <text evidence="3">Localized in discrete foci dispersed throughout the nucleus.</text>
</comment>
<comment type="tissue specificity">
    <text evidence="3">Ubiquitously expressed.</text>
</comment>
<comment type="domain">
    <text evidence="3">The RRM domain is required for single stranded RNA binding.</text>
</comment>
<comment type="disruption phenotype">
    <text evidence="3">DNA hypermethylation (at CpG, CpNpG and CpNpN sites, N is A, T or C) leading to increased siRNA-mediated transcriptional gene silencing (TGS) (PubMed:18815596). Narrow and slightly lobed second and third pairs of true leaves (PubMed:18815596). Disrupted ROS1 subcellular localization in the nucleolus (PubMed:18815596).</text>
</comment>
<sequence>MEEKSSGGGVRLHVGGLGESVGRDDLLKIFSPMGTVDAVEFVRTKGRSFAYIDFSPSSTNSLTKLFSTYNGCVWKGGRLRLEKAKEHYLARLKREWEAASSTSDNTIKAPSDSPPATHLNIFFPRLRKVKPMPLSGTGKHKYSFQRVPVSSSLPRSFCDCEEHSNSSLTPREIHLHDLEAVNVGRQEAEVNVMNSVMNKLFEKNNVDPEEDNEIEADQDNLIINVASSGNDMDSALDMLSRKRKSILNKKTPSEEGYSEGRKGNLTHPSKNRQTISLEETGRQESSQAIRGKKKPSEVVPDKSSDEPSRTKDLEQSIDNISWSQKSSWKSLMANGNSNDFSVSSFLPGVGSSKAVQPAPRNTDLAGLPSRENLKKKTKRKRVTSTIMAEDLPVSDDIKRDDSDTMADDIERDDSDAVEYYTACESMADDTASDSVAERDDSDAVEDDTAIDSMADDPASDSVAESDDGDAVENDTAIDSMADDTVSNSMAESDDGDNVEDDTAIDSMCDDTANDDVGSDDSGSLADTVSDTSVEAVPLEFVANTEGDSVDGKSNVEKHENVAEDLNAEKESLVVKENVVDEEEAGKGPLKASNKSTGGSSWLQKASWTQLVSDKNTSSFSITQLFPDLTSDKGEAAGVINNVGNQFSNSNQTASAMKQTDYASSSGGFVAAGVPVDSTPVRSLDENRQRLNGKNVSEGAKLGAKKKIIKRKVGSGDTCTFMRSSTSLKEWAKAKKALSEPRRKKNSEE</sequence>
<protein>
    <recommendedName>
        <fullName evidence="4">Protein REPRESSOR OF SILENCING 3</fullName>
    </recommendedName>
</protein>
<reference key="1">
    <citation type="journal article" date="2000" name="DNA Res.">
        <title>Structural analysis of Arabidopsis thaliana chromosome 5. X. Sequence features of the regions of 3,076,755 bp covered by sixty P1 and TAC clones.</title>
        <authorList>
            <person name="Sato S."/>
            <person name="Nakamura Y."/>
            <person name="Kaneko T."/>
            <person name="Katoh T."/>
            <person name="Asamizu E."/>
            <person name="Kotani H."/>
            <person name="Tabata S."/>
        </authorList>
    </citation>
    <scope>NUCLEOTIDE SEQUENCE [LARGE SCALE GENOMIC DNA]</scope>
    <source>
        <strain>cv. Columbia</strain>
    </source>
</reference>
<reference key="2">
    <citation type="journal article" date="2017" name="Plant J.">
        <title>Araport11: a complete reannotation of the Arabidopsis thaliana reference genome.</title>
        <authorList>
            <person name="Cheng C.Y."/>
            <person name="Krishnakumar V."/>
            <person name="Chan A.P."/>
            <person name="Thibaud-Nissen F."/>
            <person name="Schobel S."/>
            <person name="Town C.D."/>
        </authorList>
    </citation>
    <scope>GENOME REANNOTATION</scope>
    <source>
        <strain>cv. Columbia</strain>
    </source>
</reference>
<reference key="3">
    <citation type="journal article" date="2003" name="Science">
        <title>Empirical analysis of transcriptional activity in the Arabidopsis genome.</title>
        <authorList>
            <person name="Yamada K."/>
            <person name="Lim J."/>
            <person name="Dale J.M."/>
            <person name="Chen H."/>
            <person name="Shinn P."/>
            <person name="Palm C.J."/>
            <person name="Southwick A.M."/>
            <person name="Wu H.C."/>
            <person name="Kim C.J."/>
            <person name="Nguyen M."/>
            <person name="Pham P.K."/>
            <person name="Cheuk R.F."/>
            <person name="Karlin-Newmann G."/>
            <person name="Liu S.X."/>
            <person name="Lam B."/>
            <person name="Sakano H."/>
            <person name="Wu T."/>
            <person name="Yu G."/>
            <person name="Miranda M."/>
            <person name="Quach H.L."/>
            <person name="Tripp M."/>
            <person name="Chang C.H."/>
            <person name="Lee J.M."/>
            <person name="Toriumi M.J."/>
            <person name="Chan M.M."/>
            <person name="Tang C.C."/>
            <person name="Onodera C.S."/>
            <person name="Deng J.M."/>
            <person name="Akiyama K."/>
            <person name="Ansari Y."/>
            <person name="Arakawa T."/>
            <person name="Banh J."/>
            <person name="Banno F."/>
            <person name="Bowser L."/>
            <person name="Brooks S.Y."/>
            <person name="Carninci P."/>
            <person name="Chao Q."/>
            <person name="Choy N."/>
            <person name="Enju A."/>
            <person name="Goldsmith A.D."/>
            <person name="Gurjal M."/>
            <person name="Hansen N.F."/>
            <person name="Hayashizaki Y."/>
            <person name="Johnson-Hopson C."/>
            <person name="Hsuan V.W."/>
            <person name="Iida K."/>
            <person name="Karnes M."/>
            <person name="Khan S."/>
            <person name="Koesema E."/>
            <person name="Ishida J."/>
            <person name="Jiang P.X."/>
            <person name="Jones T."/>
            <person name="Kawai J."/>
            <person name="Kamiya A."/>
            <person name="Meyers C."/>
            <person name="Nakajima M."/>
            <person name="Narusaka M."/>
            <person name="Seki M."/>
            <person name="Sakurai T."/>
            <person name="Satou M."/>
            <person name="Tamse R."/>
            <person name="Vaysberg M."/>
            <person name="Wallender E.K."/>
            <person name="Wong C."/>
            <person name="Yamamura Y."/>
            <person name="Yuan S."/>
            <person name="Shinozaki K."/>
            <person name="Davis R.W."/>
            <person name="Theologis A."/>
            <person name="Ecker J.R."/>
        </authorList>
    </citation>
    <scope>NUCLEOTIDE SEQUENCE [LARGE SCALE MRNA]</scope>
    <source>
        <strain>cv. Columbia</strain>
    </source>
</reference>
<reference key="4">
    <citation type="submission" date="2006-07" db="EMBL/GenBank/DDBJ databases">
        <title>Large-scale analysis of RIKEN Arabidopsis full-length (RAFL) cDNAs.</title>
        <authorList>
            <person name="Totoki Y."/>
            <person name="Seki M."/>
            <person name="Ishida J."/>
            <person name="Nakajima M."/>
            <person name="Enju A."/>
            <person name="Kamiya A."/>
            <person name="Narusaka M."/>
            <person name="Shin-i T."/>
            <person name="Nakagawa M."/>
            <person name="Sakamoto N."/>
            <person name="Oishi K."/>
            <person name="Kohara Y."/>
            <person name="Kobayashi M."/>
            <person name="Toyoda A."/>
            <person name="Sakaki Y."/>
            <person name="Sakurai T."/>
            <person name="Iida K."/>
            <person name="Akiyama K."/>
            <person name="Satou M."/>
            <person name="Toyoda T."/>
            <person name="Konagaya A."/>
            <person name="Carninci P."/>
            <person name="Kawai J."/>
            <person name="Hayashizaki Y."/>
            <person name="Shinozaki K."/>
        </authorList>
    </citation>
    <scope>NUCLEOTIDE SEQUENCE [LARGE SCALE MRNA]</scope>
    <source>
        <strain>cv. Columbia</strain>
    </source>
</reference>
<reference key="5">
    <citation type="journal article" date="2008" name="Nature">
        <title>ROS3 is an RNA-binding protein required for DNA demethylation in Arabidopsis.</title>
        <authorList>
            <person name="Zheng X."/>
            <person name="Pontes O."/>
            <person name="Zhu J."/>
            <person name="Miki D."/>
            <person name="Zhang F."/>
            <person name="Li W.-X."/>
            <person name="Iida K."/>
            <person name="Kapoor A."/>
            <person name="Pikaard C.S."/>
            <person name="Zhu J.-K."/>
        </authorList>
    </citation>
    <scope>FUNCTION</scope>
    <scope>DISRUPTION PHENOTYPE</scope>
    <scope>SUBCELLULAR LOCATION</scope>
    <scope>TISSUE SPECIFICITY</scope>
    <scope>DOMAIN</scope>
    <source>
        <strain>cv. C24</strain>
    </source>
</reference>
<keyword id="KW-0539">Nucleus</keyword>
<keyword id="KW-1185">Reference proteome</keyword>
<keyword id="KW-0694">RNA-binding</keyword>
<keyword id="KW-0943">RNA-mediated gene silencing</keyword>
<dbReference type="EMBL" id="AB024029">
    <property type="protein sequence ID" value="BAB11005.1"/>
    <property type="molecule type" value="Genomic_DNA"/>
</dbReference>
<dbReference type="EMBL" id="CP002688">
    <property type="protein sequence ID" value="AED97000.1"/>
    <property type="molecule type" value="Genomic_DNA"/>
</dbReference>
<dbReference type="EMBL" id="AY139982">
    <property type="protein sequence ID" value="AAM98125.1"/>
    <property type="molecule type" value="mRNA"/>
</dbReference>
<dbReference type="EMBL" id="AK229306">
    <property type="protein sequence ID" value="BAF01169.1"/>
    <property type="molecule type" value="mRNA"/>
</dbReference>
<dbReference type="RefSeq" id="NP_200621.1">
    <property type="nucleotide sequence ID" value="NM_125198.5"/>
</dbReference>
<dbReference type="SMR" id="Q9FGT1"/>
<dbReference type="FunCoup" id="Q9FGT1">
    <property type="interactions" value="813"/>
</dbReference>
<dbReference type="IntAct" id="Q9FGT1">
    <property type="interactions" value="1"/>
</dbReference>
<dbReference type="STRING" id="3702.Q9FGT1"/>
<dbReference type="PaxDb" id="3702-AT5G58130.1"/>
<dbReference type="ProteomicsDB" id="175271"/>
<dbReference type="EnsemblPlants" id="AT5G58130.1">
    <property type="protein sequence ID" value="AT5G58130.1"/>
    <property type="gene ID" value="AT5G58130"/>
</dbReference>
<dbReference type="GeneID" id="835925"/>
<dbReference type="Gramene" id="AT5G58130.1">
    <property type="protein sequence ID" value="AT5G58130.1"/>
    <property type="gene ID" value="AT5G58130"/>
</dbReference>
<dbReference type="KEGG" id="ath:AT5G58130"/>
<dbReference type="Araport" id="AT5G58130"/>
<dbReference type="TAIR" id="AT5G58130">
    <property type="gene designation" value="ROS3"/>
</dbReference>
<dbReference type="eggNOG" id="ENOG502QPQA">
    <property type="taxonomic scope" value="Eukaryota"/>
</dbReference>
<dbReference type="HOGENOM" id="CLU_021819_1_0_1"/>
<dbReference type="InParanoid" id="Q9FGT1"/>
<dbReference type="OMA" id="ETCAFMR"/>
<dbReference type="PhylomeDB" id="Q9FGT1"/>
<dbReference type="CD-CODE" id="4299E36E">
    <property type="entry name" value="Nucleolus"/>
</dbReference>
<dbReference type="PRO" id="PR:Q9FGT1"/>
<dbReference type="Proteomes" id="UP000006548">
    <property type="component" value="Chromosome 5"/>
</dbReference>
<dbReference type="ExpressionAtlas" id="Q9FGT1">
    <property type="expression patterns" value="baseline and differential"/>
</dbReference>
<dbReference type="GO" id="GO:0005730">
    <property type="term" value="C:nucleolus"/>
    <property type="evidence" value="ECO:0000314"/>
    <property type="project" value="UniProtKB"/>
</dbReference>
<dbReference type="GO" id="GO:0005654">
    <property type="term" value="C:nucleoplasm"/>
    <property type="evidence" value="ECO:0000314"/>
    <property type="project" value="UniProtKB"/>
</dbReference>
<dbReference type="GO" id="GO:0005634">
    <property type="term" value="C:nucleus"/>
    <property type="evidence" value="ECO:0000314"/>
    <property type="project" value="TAIR"/>
</dbReference>
<dbReference type="GO" id="GO:0003723">
    <property type="term" value="F:RNA binding"/>
    <property type="evidence" value="ECO:0000314"/>
    <property type="project" value="TAIR"/>
</dbReference>
<dbReference type="GO" id="GO:0003727">
    <property type="term" value="F:single-stranded RNA binding"/>
    <property type="evidence" value="ECO:0000314"/>
    <property type="project" value="UniProtKB"/>
</dbReference>
<dbReference type="GO" id="GO:0060966">
    <property type="term" value="P:regulation of gene silencing by regulatory ncRNA"/>
    <property type="evidence" value="ECO:0000315"/>
    <property type="project" value="UniProtKB"/>
</dbReference>
<dbReference type="GO" id="GO:0031047">
    <property type="term" value="P:regulatory ncRNA-mediated gene silencing"/>
    <property type="evidence" value="ECO:0007669"/>
    <property type="project" value="UniProtKB-KW"/>
</dbReference>
<dbReference type="CDD" id="cd12226">
    <property type="entry name" value="RRM_NOL8"/>
    <property type="match status" value="1"/>
</dbReference>
<dbReference type="FunFam" id="3.30.70.330:FF:000685">
    <property type="entry name" value="RNA-binding (RRM/RBD/RNP motifs) family protein"/>
    <property type="match status" value="1"/>
</dbReference>
<dbReference type="Gene3D" id="3.30.70.330">
    <property type="match status" value="1"/>
</dbReference>
<dbReference type="InterPro" id="IPR034138">
    <property type="entry name" value="NOP8_RRM"/>
</dbReference>
<dbReference type="InterPro" id="IPR012677">
    <property type="entry name" value="Nucleotide-bd_a/b_plait_sf"/>
</dbReference>
<dbReference type="InterPro" id="IPR035979">
    <property type="entry name" value="RBD_domain_sf"/>
</dbReference>
<dbReference type="InterPro" id="IPR000504">
    <property type="entry name" value="RRM_dom"/>
</dbReference>
<dbReference type="PANTHER" id="PTHR23099:SF0">
    <property type="entry name" value="GERM CELL NUCLEAR ACIDIC PROTEIN"/>
    <property type="match status" value="1"/>
</dbReference>
<dbReference type="PANTHER" id="PTHR23099">
    <property type="entry name" value="TRANSCRIPTIONAL REGULATOR"/>
    <property type="match status" value="1"/>
</dbReference>
<dbReference type="SMART" id="SM00360">
    <property type="entry name" value="RRM"/>
    <property type="match status" value="1"/>
</dbReference>
<dbReference type="SUPFAM" id="SSF54928">
    <property type="entry name" value="RNA-binding domain, RBD"/>
    <property type="match status" value="1"/>
</dbReference>
<dbReference type="PROSITE" id="PS50102">
    <property type="entry name" value="RRM"/>
    <property type="match status" value="1"/>
</dbReference>
<name>ROS3_ARATH</name>
<accession>Q9FGT1</accession>
<accession>Q8L734</accession>